<organism>
    <name type="scientific">Bacillus cereus (strain AH187)</name>
    <dbReference type="NCBI Taxonomy" id="405534"/>
    <lineage>
        <taxon>Bacteria</taxon>
        <taxon>Bacillati</taxon>
        <taxon>Bacillota</taxon>
        <taxon>Bacilli</taxon>
        <taxon>Bacillales</taxon>
        <taxon>Bacillaceae</taxon>
        <taxon>Bacillus</taxon>
        <taxon>Bacillus cereus group</taxon>
    </lineage>
</organism>
<accession>B7HLL9</accession>
<comment type="function">
    <text evidence="1">Responsible for channeling the electrons from the oxidation of dihydroorotate from the FMN redox center in the PyrD type B subunit to the ultimate electron acceptor NAD(+).</text>
</comment>
<comment type="cofactor">
    <cofactor evidence="1">
        <name>[2Fe-2S] cluster</name>
        <dbReference type="ChEBI" id="CHEBI:190135"/>
    </cofactor>
    <text evidence="1">Binds 1 [2Fe-2S] cluster per subunit.</text>
</comment>
<comment type="cofactor">
    <cofactor evidence="1">
        <name>FAD</name>
        <dbReference type="ChEBI" id="CHEBI:57692"/>
    </cofactor>
    <text evidence="1">Binds 1 FAD per subunit.</text>
</comment>
<comment type="pathway">
    <text evidence="1">Pyrimidine metabolism; UMP biosynthesis via de novo pathway; orotate from (S)-dihydroorotate (NAD(+) route): step 1/1.</text>
</comment>
<comment type="subunit">
    <text evidence="1">Heterotetramer of 2 PyrK and 2 PyrD type B subunits.</text>
</comment>
<comment type="similarity">
    <text evidence="1">Belongs to the PyrK family.</text>
</comment>
<evidence type="ECO:0000255" key="1">
    <source>
        <dbReference type="HAMAP-Rule" id="MF_01211"/>
    </source>
</evidence>
<dbReference type="EMBL" id="CP001177">
    <property type="protein sequence ID" value="ACJ82336.1"/>
    <property type="molecule type" value="Genomic_DNA"/>
</dbReference>
<dbReference type="SMR" id="B7HLL9"/>
<dbReference type="KEGG" id="bcr:BCAH187_A3934"/>
<dbReference type="HOGENOM" id="CLU_003827_1_2_9"/>
<dbReference type="UniPathway" id="UPA00070">
    <property type="reaction ID" value="UER00945"/>
</dbReference>
<dbReference type="Proteomes" id="UP000002214">
    <property type="component" value="Chromosome"/>
</dbReference>
<dbReference type="GO" id="GO:0051537">
    <property type="term" value="F:2 iron, 2 sulfur cluster binding"/>
    <property type="evidence" value="ECO:0007669"/>
    <property type="project" value="UniProtKB-KW"/>
</dbReference>
<dbReference type="GO" id="GO:0009055">
    <property type="term" value="F:electron transfer activity"/>
    <property type="evidence" value="ECO:0007669"/>
    <property type="project" value="UniProtKB-UniRule"/>
</dbReference>
<dbReference type="GO" id="GO:0050660">
    <property type="term" value="F:flavin adenine dinucleotide binding"/>
    <property type="evidence" value="ECO:0007669"/>
    <property type="project" value="InterPro"/>
</dbReference>
<dbReference type="GO" id="GO:0046872">
    <property type="term" value="F:metal ion binding"/>
    <property type="evidence" value="ECO:0007669"/>
    <property type="project" value="UniProtKB-KW"/>
</dbReference>
<dbReference type="GO" id="GO:0016491">
    <property type="term" value="F:oxidoreductase activity"/>
    <property type="evidence" value="ECO:0007669"/>
    <property type="project" value="InterPro"/>
</dbReference>
<dbReference type="GO" id="GO:0044205">
    <property type="term" value="P:'de novo' UMP biosynthetic process"/>
    <property type="evidence" value="ECO:0007669"/>
    <property type="project" value="UniProtKB-UniRule"/>
</dbReference>
<dbReference type="CDD" id="cd06218">
    <property type="entry name" value="DHOD_e_trans"/>
    <property type="match status" value="1"/>
</dbReference>
<dbReference type="FunFam" id="2.10.240.10:FF:000001">
    <property type="entry name" value="Dihydroorotate dehydrogenase B (NAD(+)), electron transfer subunit"/>
    <property type="match status" value="1"/>
</dbReference>
<dbReference type="FunFam" id="2.40.30.10:FF:000045">
    <property type="entry name" value="Dihydroorotate dehydrogenase B (NAD(+)), electron transfer subunit"/>
    <property type="match status" value="1"/>
</dbReference>
<dbReference type="FunFam" id="3.40.50.80:FF:000017">
    <property type="entry name" value="Dihydroorotate dehydrogenase B (NAD(+)), electron transfer subunit"/>
    <property type="match status" value="1"/>
</dbReference>
<dbReference type="Gene3D" id="2.10.240.10">
    <property type="entry name" value="Dihydroorotate dehydrogenase, electron transfer subunit"/>
    <property type="match status" value="1"/>
</dbReference>
<dbReference type="Gene3D" id="3.40.50.80">
    <property type="entry name" value="Nucleotide-binding domain of ferredoxin-NADP reductase (FNR) module"/>
    <property type="match status" value="1"/>
</dbReference>
<dbReference type="Gene3D" id="2.40.30.10">
    <property type="entry name" value="Translation factors"/>
    <property type="match status" value="1"/>
</dbReference>
<dbReference type="HAMAP" id="MF_01211">
    <property type="entry name" value="DHODB_Fe_S_bind"/>
    <property type="match status" value="1"/>
</dbReference>
<dbReference type="InterPro" id="IPR012165">
    <property type="entry name" value="Cyt_c3_hydrogenase_gsu"/>
</dbReference>
<dbReference type="InterPro" id="IPR037117">
    <property type="entry name" value="Dihydroorotate_DH_ele_sf"/>
</dbReference>
<dbReference type="InterPro" id="IPR019480">
    <property type="entry name" value="Dihydroorotate_DH_Fe-S-bd"/>
</dbReference>
<dbReference type="InterPro" id="IPR023455">
    <property type="entry name" value="Dihydroorotate_DHASE_ETsu"/>
</dbReference>
<dbReference type="InterPro" id="IPR017927">
    <property type="entry name" value="FAD-bd_FR_type"/>
</dbReference>
<dbReference type="InterPro" id="IPR039261">
    <property type="entry name" value="FNR_nucleotide-bd"/>
</dbReference>
<dbReference type="InterPro" id="IPR001433">
    <property type="entry name" value="OxRdtase_FAD/NAD-bd"/>
</dbReference>
<dbReference type="InterPro" id="IPR050353">
    <property type="entry name" value="PyrK_electron_transfer"/>
</dbReference>
<dbReference type="InterPro" id="IPR017938">
    <property type="entry name" value="Riboflavin_synthase-like_b-brl"/>
</dbReference>
<dbReference type="NCBIfam" id="NF000797">
    <property type="entry name" value="PRK00054.1-2"/>
    <property type="match status" value="1"/>
</dbReference>
<dbReference type="NCBIfam" id="NF000799">
    <property type="entry name" value="PRK00054.1-4"/>
    <property type="match status" value="1"/>
</dbReference>
<dbReference type="PANTHER" id="PTHR43513">
    <property type="entry name" value="DIHYDROOROTATE DEHYDROGENASE B (NAD(+)), ELECTRON TRANSFER SUBUNIT"/>
    <property type="match status" value="1"/>
</dbReference>
<dbReference type="PANTHER" id="PTHR43513:SF3">
    <property type="entry name" value="DIHYDROOROTATE DEHYDROGENASE B (NAD(+)), ELECTRON TRANSFER SUBUNIT-RELATED"/>
    <property type="match status" value="1"/>
</dbReference>
<dbReference type="Pfam" id="PF10418">
    <property type="entry name" value="DHODB_Fe-S_bind"/>
    <property type="match status" value="1"/>
</dbReference>
<dbReference type="Pfam" id="PF00175">
    <property type="entry name" value="NAD_binding_1"/>
    <property type="match status" value="1"/>
</dbReference>
<dbReference type="PIRSF" id="PIRSF006816">
    <property type="entry name" value="Cyc3_hyd_g"/>
    <property type="match status" value="1"/>
</dbReference>
<dbReference type="PRINTS" id="PR00409">
    <property type="entry name" value="PHDIOXRDTASE"/>
</dbReference>
<dbReference type="SUPFAM" id="SSF52343">
    <property type="entry name" value="Ferredoxin reductase-like, C-terminal NADP-linked domain"/>
    <property type="match status" value="1"/>
</dbReference>
<dbReference type="SUPFAM" id="SSF63380">
    <property type="entry name" value="Riboflavin synthase domain-like"/>
    <property type="match status" value="1"/>
</dbReference>
<dbReference type="PROSITE" id="PS51384">
    <property type="entry name" value="FAD_FR"/>
    <property type="match status" value="1"/>
</dbReference>
<reference key="1">
    <citation type="submission" date="2008-10" db="EMBL/GenBank/DDBJ databases">
        <title>Genome sequence of Bacillus cereus AH187.</title>
        <authorList>
            <person name="Dodson R.J."/>
            <person name="Durkin A.S."/>
            <person name="Rosovitz M.J."/>
            <person name="Rasko D.A."/>
            <person name="Kolsto A.B."/>
            <person name="Okstad O.A."/>
            <person name="Ravel J."/>
            <person name="Sutton G."/>
        </authorList>
    </citation>
    <scope>NUCLEOTIDE SEQUENCE [LARGE SCALE GENOMIC DNA]</scope>
    <source>
        <strain>AH187</strain>
    </source>
</reference>
<feature type="chain" id="PRO_1000138909" description="Dihydroorotate dehydrogenase B (NAD(+)), electron transfer subunit">
    <location>
        <begin position="1"/>
        <end position="259"/>
    </location>
</feature>
<feature type="domain" description="FAD-binding FR-type" evidence="1">
    <location>
        <begin position="2"/>
        <end position="102"/>
    </location>
</feature>
<feature type="binding site" evidence="1">
    <location>
        <begin position="53"/>
        <end position="56"/>
    </location>
    <ligand>
        <name>FAD</name>
        <dbReference type="ChEBI" id="CHEBI:57692"/>
    </ligand>
</feature>
<feature type="binding site" evidence="1">
    <location>
        <begin position="70"/>
        <end position="72"/>
    </location>
    <ligand>
        <name>FAD</name>
        <dbReference type="ChEBI" id="CHEBI:57692"/>
    </ligand>
</feature>
<feature type="binding site" evidence="1">
    <location>
        <begin position="77"/>
        <end position="78"/>
    </location>
    <ligand>
        <name>FAD</name>
        <dbReference type="ChEBI" id="CHEBI:57692"/>
    </ligand>
</feature>
<feature type="binding site" evidence="1">
    <location>
        <position position="221"/>
    </location>
    <ligand>
        <name>[2Fe-2S] cluster</name>
        <dbReference type="ChEBI" id="CHEBI:190135"/>
    </ligand>
</feature>
<feature type="binding site" evidence="1">
    <location>
        <position position="226"/>
    </location>
    <ligand>
        <name>[2Fe-2S] cluster</name>
        <dbReference type="ChEBI" id="CHEBI:190135"/>
    </ligand>
</feature>
<feature type="binding site" evidence="1">
    <location>
        <position position="229"/>
    </location>
    <ligand>
        <name>[2Fe-2S] cluster</name>
        <dbReference type="ChEBI" id="CHEBI:190135"/>
    </ligand>
</feature>
<feature type="binding site" evidence="1">
    <location>
        <position position="246"/>
    </location>
    <ligand>
        <name>[2Fe-2S] cluster</name>
        <dbReference type="ChEBI" id="CHEBI:190135"/>
    </ligand>
</feature>
<proteinExistence type="inferred from homology"/>
<gene>
    <name evidence="1" type="primary">pyrK</name>
    <name type="ordered locus">BCAH187_A3934</name>
</gene>
<sequence length="259" mass="28439">MMQKQNMIVVNQKEIAKNIYELVLQGTLVQQMNEPGQFVHIKVAEGIAPLLRRPISICNVDQEKNEFTMLYRAEGQGTKTLATRKQGEMVDVLGPLGHGFPVEEAEAGQTALLVGGGIGVPPLYELSQRLVAKGVRVIHILGFQTKDVVFYEEKFAELGDTYVATVDGTHGTKGFVTDVIDHYGIDFDILYSCGPLAMLRALEGRYKEKKAYISLEERMGCGIGACFACVCHLQEDPSGHSYKKVCSDGPVFPIGEVVL</sequence>
<protein>
    <recommendedName>
        <fullName evidence="1">Dihydroorotate dehydrogenase B (NAD(+)), electron transfer subunit</fullName>
    </recommendedName>
    <alternativeName>
        <fullName evidence="1">Dihydroorotate oxidase B, electron transfer subunit</fullName>
    </alternativeName>
</protein>
<name>PYRK_BACC7</name>
<keyword id="KW-0001">2Fe-2S</keyword>
<keyword id="KW-0249">Electron transport</keyword>
<keyword id="KW-0274">FAD</keyword>
<keyword id="KW-0285">Flavoprotein</keyword>
<keyword id="KW-0408">Iron</keyword>
<keyword id="KW-0411">Iron-sulfur</keyword>
<keyword id="KW-0479">Metal-binding</keyword>
<keyword id="KW-0665">Pyrimidine biosynthesis</keyword>
<keyword id="KW-0813">Transport</keyword>